<evidence type="ECO:0000250" key="1">
    <source>
        <dbReference type="UniProtKB" id="Q9QY84"/>
    </source>
</evidence>
<evidence type="ECO:0000250" key="2">
    <source>
        <dbReference type="UniProtKB" id="Q9Y615"/>
    </source>
</evidence>
<evidence type="ECO:0000256" key="3">
    <source>
        <dbReference type="SAM" id="MobiDB-lite"/>
    </source>
</evidence>
<evidence type="ECO:0000305" key="4"/>
<gene>
    <name type="primary">ACTL7A</name>
    <name type="ORF">QtsA-13302</name>
    <name type="ORF">QtsA-17410</name>
</gene>
<dbReference type="EMBL" id="AB168594">
    <property type="protein sequence ID" value="BAE00708.1"/>
    <property type="molecule type" value="mRNA"/>
</dbReference>
<dbReference type="EMBL" id="AB169127">
    <property type="protein sequence ID" value="BAE01221.1"/>
    <property type="molecule type" value="mRNA"/>
</dbReference>
<dbReference type="RefSeq" id="NP_001270639.1">
    <property type="nucleotide sequence ID" value="NM_001283710.1"/>
</dbReference>
<dbReference type="RefSeq" id="XP_015291978.1">
    <property type="nucleotide sequence ID" value="XM_015436492.1"/>
</dbReference>
<dbReference type="SMR" id="Q4R6Q3"/>
<dbReference type="STRING" id="9541.ENSMFAP00000010319"/>
<dbReference type="eggNOG" id="KOG0676">
    <property type="taxonomic scope" value="Eukaryota"/>
</dbReference>
<dbReference type="Proteomes" id="UP000233100">
    <property type="component" value="Unplaced"/>
</dbReference>
<dbReference type="GO" id="GO:0001669">
    <property type="term" value="C:acrosomal vesicle"/>
    <property type="evidence" value="ECO:0000250"/>
    <property type="project" value="UniProtKB"/>
</dbReference>
<dbReference type="GO" id="GO:0005737">
    <property type="term" value="C:cytoplasm"/>
    <property type="evidence" value="ECO:0000250"/>
    <property type="project" value="UniProtKB"/>
</dbReference>
<dbReference type="GO" id="GO:0005856">
    <property type="term" value="C:cytoskeleton"/>
    <property type="evidence" value="ECO:0007669"/>
    <property type="project" value="UniProtKB-SubCell"/>
</dbReference>
<dbReference type="GO" id="GO:0005794">
    <property type="term" value="C:Golgi apparatus"/>
    <property type="evidence" value="ECO:0007669"/>
    <property type="project" value="UniProtKB-SubCell"/>
</dbReference>
<dbReference type="GO" id="GO:0005634">
    <property type="term" value="C:nucleus"/>
    <property type="evidence" value="ECO:0000250"/>
    <property type="project" value="UniProtKB"/>
</dbReference>
<dbReference type="GO" id="GO:0001675">
    <property type="term" value="P:acrosome assembly"/>
    <property type="evidence" value="ECO:0000250"/>
    <property type="project" value="UniProtKB"/>
</dbReference>
<dbReference type="GO" id="GO:0009566">
    <property type="term" value="P:fertilization"/>
    <property type="evidence" value="ECO:0000250"/>
    <property type="project" value="UniProtKB"/>
</dbReference>
<dbReference type="GO" id="GO:0007338">
    <property type="term" value="P:single fertilization"/>
    <property type="evidence" value="ECO:0007669"/>
    <property type="project" value="UniProtKB-KW"/>
</dbReference>
<dbReference type="GO" id="GO:0007286">
    <property type="term" value="P:spermatid development"/>
    <property type="evidence" value="ECO:0000250"/>
    <property type="project" value="UniProtKB"/>
</dbReference>
<dbReference type="CDD" id="cd10214">
    <property type="entry name" value="ASKHA_NBD_ACTL7"/>
    <property type="match status" value="1"/>
</dbReference>
<dbReference type="FunFam" id="3.90.640.10:FF:000007">
    <property type="entry name" value="Actin like 7B"/>
    <property type="match status" value="1"/>
</dbReference>
<dbReference type="FunFam" id="3.30.420.40:FF:000050">
    <property type="entry name" value="Actin, alpha skeletal muscle"/>
    <property type="match status" value="1"/>
</dbReference>
<dbReference type="Gene3D" id="3.30.420.40">
    <property type="match status" value="2"/>
</dbReference>
<dbReference type="Gene3D" id="3.90.640.10">
    <property type="entry name" value="Actin, Chain A, domain 4"/>
    <property type="match status" value="1"/>
</dbReference>
<dbReference type="InterPro" id="IPR004000">
    <property type="entry name" value="Actin"/>
</dbReference>
<dbReference type="InterPro" id="IPR031769">
    <property type="entry name" value="ACTL7A_N"/>
</dbReference>
<dbReference type="InterPro" id="IPR043129">
    <property type="entry name" value="ATPase_NBD"/>
</dbReference>
<dbReference type="PANTHER" id="PTHR11937">
    <property type="entry name" value="ACTIN"/>
    <property type="match status" value="1"/>
</dbReference>
<dbReference type="Pfam" id="PF00022">
    <property type="entry name" value="Actin"/>
    <property type="match status" value="1"/>
</dbReference>
<dbReference type="Pfam" id="PF16840">
    <property type="entry name" value="ACTL7A_N"/>
    <property type="match status" value="1"/>
</dbReference>
<dbReference type="PRINTS" id="PR00190">
    <property type="entry name" value="ACTIN"/>
</dbReference>
<dbReference type="SMART" id="SM00268">
    <property type="entry name" value="ACTIN"/>
    <property type="match status" value="1"/>
</dbReference>
<dbReference type="SUPFAM" id="SSF53067">
    <property type="entry name" value="Actin-like ATPase domain"/>
    <property type="match status" value="2"/>
</dbReference>
<feature type="chain" id="PRO_0000260761" description="Actin-like protein 7A">
    <location>
        <begin position="1"/>
        <end position="435"/>
    </location>
</feature>
<feature type="region of interest" description="Disordered" evidence="3">
    <location>
        <begin position="1"/>
        <end position="20"/>
    </location>
</feature>
<feature type="region of interest" description="Disordered" evidence="3">
    <location>
        <begin position="29"/>
        <end position="65"/>
    </location>
</feature>
<feature type="region of interest" description="Required for interaction with TES" evidence="2">
    <location>
        <begin position="31"/>
        <end position="51"/>
    </location>
</feature>
<feature type="compositionally biased region" description="Basic and acidic residues" evidence="3">
    <location>
        <begin position="47"/>
        <end position="65"/>
    </location>
</feature>
<feature type="sequence conflict" description="In Ref. 1; BAE00708." evidence="4" ref="1">
    <original>R</original>
    <variation>K</variation>
    <location>
        <position position="291"/>
    </location>
</feature>
<organism>
    <name type="scientific">Macaca fascicularis</name>
    <name type="common">Crab-eating macaque</name>
    <name type="synonym">Cynomolgus monkey</name>
    <dbReference type="NCBI Taxonomy" id="9541"/>
    <lineage>
        <taxon>Eukaryota</taxon>
        <taxon>Metazoa</taxon>
        <taxon>Chordata</taxon>
        <taxon>Craniata</taxon>
        <taxon>Vertebrata</taxon>
        <taxon>Euteleostomi</taxon>
        <taxon>Mammalia</taxon>
        <taxon>Eutheria</taxon>
        <taxon>Euarchontoglires</taxon>
        <taxon>Primates</taxon>
        <taxon>Haplorrhini</taxon>
        <taxon>Catarrhini</taxon>
        <taxon>Cercopithecidae</taxon>
        <taxon>Cercopithecinae</taxon>
        <taxon>Macaca</taxon>
    </lineage>
</organism>
<protein>
    <recommendedName>
        <fullName>Actin-like protein 7A</fullName>
    </recommendedName>
</protein>
<name>ACL7A_MACFA</name>
<keyword id="KW-0963">Cytoplasm</keyword>
<keyword id="KW-0206">Cytoskeleton</keyword>
<keyword id="KW-0221">Differentiation</keyword>
<keyword id="KW-0278">Fertilization</keyword>
<keyword id="KW-0333">Golgi apparatus</keyword>
<keyword id="KW-0539">Nucleus</keyword>
<keyword id="KW-1185">Reference proteome</keyword>
<keyword id="KW-0744">Spermatogenesis</keyword>
<reference key="1">
    <citation type="submission" date="2005-06" db="EMBL/GenBank/DDBJ databases">
        <title>DNA sequences of macaque genes expressed in brain or testis and its evolutionary implications.</title>
        <authorList>
            <consortium name="International consortium for macaque cDNA sequencing and analysis"/>
        </authorList>
    </citation>
    <scope>NUCLEOTIDE SEQUENCE [LARGE SCALE MRNA]</scope>
    <source>
        <tissue>Testis</tissue>
    </source>
</reference>
<proteinExistence type="evidence at transcript level"/>
<sequence length="435" mass="48734">MWAPPAAIMGDGPAKKVGNQAPLQTQALQTASLRDGPAKRAVWVRRRSSEPQEPTESKAAKERPKQEVTKAVVVDLGTGYCKCGFAGLPRPTHKISTMVGKPYMETAKTGDNRKETFVGQELNNTNVHLKLVNPLRHGIIVDWDTVQDIWEYLFRQEMKIAPEEHAVLVSDPPLSPHTNREKYAEMLFEAFNTPAMHIAYQSRLSMYSYGRTSGLVVEVGHGVSYVVPIYEGYPLPSITGRLDYAGSDLTAYLLGLLNSAGNEFTQDQMGIVEDIKKKCCFVALDPTEEKRVPLSEHTIRYVLPDGKEIQLCQERFLCSEMFFKPSLIKSMQLGLHTQTVSCLNKCDIALKRDLMGNILLCGGSTMLSGFPNRLQKELSSMCPNDTPQVNVLPERDSAVWTGGSILASLQGFQPLWVHRFEYEEHGPFFLYRRCF</sequence>
<comment type="function">
    <text evidence="1">Essential for normal spermatogenesis and male fertility. Required for normal sperm head morphology, acroplaxome formation, acrosome attachment, and acrosome granule stability. May anchor and stabilize acrosomal adherence to the acroplaxome at least in part by facilitating the presence of F-actin in the subacrosomal space. May play an important role in formation and fusion of Golgi-derived vesicles during acrosome biogenesis.</text>
</comment>
<comment type="subunit">
    <text evidence="2">Interacts (via N-terminus) with TES (via LIM domain 2). Heterodimer with TES; the heterodimer interacts with ENAH to form a heterotrimer. Interacts with ACTL9. Interacts with CYLC1; the interaction may be relevant for proper acrosome attachment to the nuclear envelope (By similarity).</text>
</comment>
<comment type="subcellular location">
    <subcellularLocation>
        <location evidence="1">Cytoplasm</location>
        <location evidence="1">Cytoskeleton</location>
    </subcellularLocation>
    <subcellularLocation>
        <location evidence="1">Golgi apparatus</location>
    </subcellularLocation>
    <subcellularLocation>
        <location evidence="1">Cytoplasm</location>
    </subcellularLocation>
    <subcellularLocation>
        <location evidence="1">Nucleus</location>
    </subcellularLocation>
    <text evidence="1">Detected at the Golgi apparatus during acrosome biogenesis. Detected at the subacrosomal layer in round spermatids. Detected in sperm head and tail.</text>
</comment>
<comment type="similarity">
    <text evidence="4">Belongs to the actin family.</text>
</comment>
<accession>Q4R6Q3</accession>
<accession>Q4R864</accession>